<accession>Q8ZWP5</accession>
<reference key="1">
    <citation type="journal article" date="2002" name="Proc. Natl. Acad. Sci. U.S.A.">
        <title>Genome sequence of the hyperthermophilic crenarchaeon Pyrobaculum aerophilum.</title>
        <authorList>
            <person name="Fitz-Gibbon S.T."/>
            <person name="Ladner H."/>
            <person name="Kim U.-J."/>
            <person name="Stetter K.O."/>
            <person name="Simon M.I."/>
            <person name="Miller J.H."/>
        </authorList>
    </citation>
    <scope>NUCLEOTIDE SEQUENCE [LARGE SCALE GENOMIC DNA]</scope>
    <source>
        <strain>ATCC 51768 / DSM 7523 / JCM 9630 / CIP 104966 / NBRC 100827 / IM2</strain>
    </source>
</reference>
<gene>
    <name evidence="1" type="primary">egsA</name>
    <name type="ordered locus">PAE1685</name>
</gene>
<feature type="chain" id="PRO_0000157348" description="Glycerol-1-phosphate dehydrogenase [NAD(P)+]">
    <location>
        <begin position="1"/>
        <end position="342"/>
    </location>
</feature>
<feature type="binding site" evidence="1">
    <location>
        <begin position="84"/>
        <end position="88"/>
    </location>
    <ligand>
        <name>NAD(+)</name>
        <dbReference type="ChEBI" id="CHEBI:57540"/>
    </ligand>
</feature>
<feature type="binding site" evidence="1">
    <location>
        <begin position="106"/>
        <end position="109"/>
    </location>
    <ligand>
        <name>NAD(+)</name>
        <dbReference type="ChEBI" id="CHEBI:57540"/>
    </ligand>
</feature>
<feature type="binding site" evidence="1">
    <location>
        <position position="111"/>
    </location>
    <ligand>
        <name>substrate</name>
    </ligand>
</feature>
<feature type="binding site" evidence="1">
    <location>
        <position position="115"/>
    </location>
    <ligand>
        <name>NAD(+)</name>
        <dbReference type="ChEBI" id="CHEBI:57540"/>
    </ligand>
</feature>
<feature type="binding site" evidence="1">
    <location>
        <position position="160"/>
    </location>
    <ligand>
        <name>substrate</name>
    </ligand>
</feature>
<feature type="binding site" evidence="1">
    <location>
        <position position="160"/>
    </location>
    <ligand>
        <name>Zn(2+)</name>
        <dbReference type="ChEBI" id="CHEBI:29105"/>
        <note>catalytic</note>
    </ligand>
</feature>
<feature type="binding site" evidence="1">
    <location>
        <position position="241"/>
    </location>
    <ligand>
        <name>Zn(2+)</name>
        <dbReference type="ChEBI" id="CHEBI:29105"/>
        <note>catalytic</note>
    </ligand>
</feature>
<feature type="binding site" evidence="1">
    <location>
        <position position="245"/>
    </location>
    <ligand>
        <name>substrate</name>
    </ligand>
</feature>
<feature type="binding site" evidence="1">
    <location>
        <position position="260"/>
    </location>
    <ligand>
        <name>Zn(2+)</name>
        <dbReference type="ChEBI" id="CHEBI:29105"/>
        <note>catalytic</note>
    </ligand>
</feature>
<comment type="function">
    <text evidence="1">Catalyzes the NAD(P)H-dependent reduction of dihydroxyacetonephosphate (DHAP or glycerone phosphate) to glycerol 1-phosphate (G1P). The G1P thus generated is used as the glycerophosphate backbone of phospholipids in the cellular membranes of Archaea.</text>
</comment>
<comment type="catalytic activity">
    <reaction evidence="1">
        <text>sn-glycerol 1-phosphate + NAD(+) = dihydroxyacetone phosphate + NADH + H(+)</text>
        <dbReference type="Rhea" id="RHEA:21412"/>
        <dbReference type="ChEBI" id="CHEBI:15378"/>
        <dbReference type="ChEBI" id="CHEBI:57540"/>
        <dbReference type="ChEBI" id="CHEBI:57642"/>
        <dbReference type="ChEBI" id="CHEBI:57685"/>
        <dbReference type="ChEBI" id="CHEBI:57945"/>
        <dbReference type="EC" id="1.1.1.261"/>
    </reaction>
</comment>
<comment type="catalytic activity">
    <reaction evidence="1">
        <text>sn-glycerol 1-phosphate + NADP(+) = dihydroxyacetone phosphate + NADPH + H(+)</text>
        <dbReference type="Rhea" id="RHEA:21416"/>
        <dbReference type="ChEBI" id="CHEBI:15378"/>
        <dbReference type="ChEBI" id="CHEBI:57642"/>
        <dbReference type="ChEBI" id="CHEBI:57685"/>
        <dbReference type="ChEBI" id="CHEBI:57783"/>
        <dbReference type="ChEBI" id="CHEBI:58349"/>
        <dbReference type="EC" id="1.1.1.261"/>
    </reaction>
</comment>
<comment type="cofactor">
    <cofactor evidence="1">
        <name>Zn(2+)</name>
        <dbReference type="ChEBI" id="CHEBI:29105"/>
    </cofactor>
    <text evidence="1">Binds 1 zinc ion per subunit.</text>
</comment>
<comment type="pathway">
    <text evidence="1">Membrane lipid metabolism; glycerophospholipid metabolism.</text>
</comment>
<comment type="subunit">
    <text evidence="1">Homodimer.</text>
</comment>
<comment type="subcellular location">
    <subcellularLocation>
        <location evidence="1">Cytoplasm</location>
    </subcellularLocation>
</comment>
<comment type="similarity">
    <text evidence="1">Belongs to the glycerol-1-phosphate dehydrogenase family.</text>
</comment>
<sequence length="342" mass="36878">MKQLESFQIPRIVIFGPGAILKTPLVVSELKAGRILVISGKSATTAYANQVAQLLSNYSVDVVRYNEVDLSKSSYDLVIGVGGGRPIDMAKVYSCVHKKPLVVIPTAASHDGIASPYVSYTLSQKLQTYGKIVASPVAIIADTSVILSAPSRLLKAGIGDLLGKIIAVRDWQLAHRLKGEEYSEYAAHLAVTSYKIAATNARRIRNFTREEDVRVLVKALIGCGVAMGIAGSSRPCSGSEHLFAHAIELRLQEESSEAVHGELVALGTIIMAYLHGINWRRIKKIAEIVGLPTTLKQAGIDADMAVEALTTAHALRPDRYTILGNGLSREAARRALEDTELI</sequence>
<keyword id="KW-0963">Cytoplasm</keyword>
<keyword id="KW-0444">Lipid biosynthesis</keyword>
<keyword id="KW-0443">Lipid metabolism</keyword>
<keyword id="KW-0479">Metal-binding</keyword>
<keyword id="KW-0520">NAD</keyword>
<keyword id="KW-0521">NADP</keyword>
<keyword id="KW-0560">Oxidoreductase</keyword>
<keyword id="KW-0594">Phospholipid biosynthesis</keyword>
<keyword id="KW-1208">Phospholipid metabolism</keyword>
<keyword id="KW-1185">Reference proteome</keyword>
<keyword id="KW-0862">Zinc</keyword>
<proteinExistence type="inferred from homology"/>
<name>G1PDH_PYRAE</name>
<evidence type="ECO:0000255" key="1">
    <source>
        <dbReference type="HAMAP-Rule" id="MF_00497"/>
    </source>
</evidence>
<organism>
    <name type="scientific">Pyrobaculum aerophilum (strain ATCC 51768 / DSM 7523 / JCM 9630 / CIP 104966 / NBRC 100827 / IM2)</name>
    <dbReference type="NCBI Taxonomy" id="178306"/>
    <lineage>
        <taxon>Archaea</taxon>
        <taxon>Thermoproteota</taxon>
        <taxon>Thermoprotei</taxon>
        <taxon>Thermoproteales</taxon>
        <taxon>Thermoproteaceae</taxon>
        <taxon>Pyrobaculum</taxon>
    </lineage>
</organism>
<dbReference type="EC" id="1.1.1.261" evidence="1"/>
<dbReference type="EMBL" id="AE009441">
    <property type="protein sequence ID" value="AAL63655.1"/>
    <property type="molecule type" value="Genomic_DNA"/>
</dbReference>
<dbReference type="RefSeq" id="WP_011008128.1">
    <property type="nucleotide sequence ID" value="NC_003364.1"/>
</dbReference>
<dbReference type="SMR" id="Q8ZWP5"/>
<dbReference type="FunCoup" id="Q8ZWP5">
    <property type="interactions" value="1"/>
</dbReference>
<dbReference type="STRING" id="178306.PAE1685"/>
<dbReference type="EnsemblBacteria" id="AAL63655">
    <property type="protein sequence ID" value="AAL63655"/>
    <property type="gene ID" value="PAE1685"/>
</dbReference>
<dbReference type="GeneID" id="1465904"/>
<dbReference type="KEGG" id="pai:PAE1685"/>
<dbReference type="PATRIC" id="fig|178306.9.peg.1247"/>
<dbReference type="eggNOG" id="arCOG00982">
    <property type="taxonomic scope" value="Archaea"/>
</dbReference>
<dbReference type="HOGENOM" id="CLU_038362_0_0_2"/>
<dbReference type="InParanoid" id="Q8ZWP5"/>
<dbReference type="UniPathway" id="UPA00940"/>
<dbReference type="Proteomes" id="UP000002439">
    <property type="component" value="Chromosome"/>
</dbReference>
<dbReference type="GO" id="GO:0005737">
    <property type="term" value="C:cytoplasm"/>
    <property type="evidence" value="ECO:0007669"/>
    <property type="project" value="UniProtKB-SubCell"/>
</dbReference>
<dbReference type="GO" id="GO:0106357">
    <property type="term" value="F:glycerol-1-phosphate dehydrogenase (NAD+) activity"/>
    <property type="evidence" value="ECO:0007669"/>
    <property type="project" value="RHEA"/>
</dbReference>
<dbReference type="GO" id="GO:0106358">
    <property type="term" value="F:glycerol-1-phosphate dehydrogenase (NADP+) activity"/>
    <property type="evidence" value="ECO:0007669"/>
    <property type="project" value="RHEA"/>
</dbReference>
<dbReference type="GO" id="GO:0046872">
    <property type="term" value="F:metal ion binding"/>
    <property type="evidence" value="ECO:0007669"/>
    <property type="project" value="UniProtKB-KW"/>
</dbReference>
<dbReference type="GO" id="GO:0006650">
    <property type="term" value="P:glycerophospholipid metabolic process"/>
    <property type="evidence" value="ECO:0007669"/>
    <property type="project" value="UniProtKB-UniRule"/>
</dbReference>
<dbReference type="GO" id="GO:0008654">
    <property type="term" value="P:phospholipid biosynthetic process"/>
    <property type="evidence" value="ECO:0007669"/>
    <property type="project" value="UniProtKB-KW"/>
</dbReference>
<dbReference type="CDD" id="cd08173">
    <property type="entry name" value="Gro1PDH"/>
    <property type="match status" value="1"/>
</dbReference>
<dbReference type="Gene3D" id="3.40.50.1970">
    <property type="match status" value="1"/>
</dbReference>
<dbReference type="Gene3D" id="1.20.1090.10">
    <property type="entry name" value="Dehydroquinate synthase-like - alpha domain"/>
    <property type="match status" value="1"/>
</dbReference>
<dbReference type="HAMAP" id="MF_00497_A">
    <property type="entry name" value="G1P_dehydrogenase_A"/>
    <property type="match status" value="1"/>
</dbReference>
<dbReference type="InterPro" id="IPR023002">
    <property type="entry name" value="G1P_dehydrogenase_arc"/>
</dbReference>
<dbReference type="InterPro" id="IPR032837">
    <property type="entry name" value="G1PDH"/>
</dbReference>
<dbReference type="InterPro" id="IPR016205">
    <property type="entry name" value="Glycerol_DH"/>
</dbReference>
<dbReference type="PANTHER" id="PTHR43616">
    <property type="entry name" value="GLYCEROL DEHYDROGENASE"/>
    <property type="match status" value="1"/>
</dbReference>
<dbReference type="PANTHER" id="PTHR43616:SF5">
    <property type="entry name" value="GLYCEROL DEHYDROGENASE 1"/>
    <property type="match status" value="1"/>
</dbReference>
<dbReference type="Pfam" id="PF13685">
    <property type="entry name" value="Fe-ADH_2"/>
    <property type="match status" value="1"/>
</dbReference>
<dbReference type="PIRSF" id="PIRSF000112">
    <property type="entry name" value="Glycerol_dehydrogenase"/>
    <property type="match status" value="1"/>
</dbReference>
<dbReference type="SUPFAM" id="SSF56796">
    <property type="entry name" value="Dehydroquinate synthase-like"/>
    <property type="match status" value="1"/>
</dbReference>
<protein>
    <recommendedName>
        <fullName evidence="1">Glycerol-1-phosphate dehydrogenase [NAD(P)+]</fullName>
        <shortName evidence="1">G1P dehydrogenase</shortName>
        <shortName evidence="1">G1PDH</shortName>
        <ecNumber evidence="1">1.1.1.261</ecNumber>
    </recommendedName>
    <alternativeName>
        <fullName evidence="1">Enantiomeric glycerophosphate synthase</fullName>
    </alternativeName>
    <alternativeName>
        <fullName evidence="1">sn-glycerol-1-phosphate dehydrogenase</fullName>
    </alternativeName>
</protein>